<accession>P46420</accession>
<organism>
    <name type="scientific">Zea mays</name>
    <name type="common">Maize</name>
    <dbReference type="NCBI Taxonomy" id="4577"/>
    <lineage>
        <taxon>Eukaryota</taxon>
        <taxon>Viridiplantae</taxon>
        <taxon>Streptophyta</taxon>
        <taxon>Embryophyta</taxon>
        <taxon>Tracheophyta</taxon>
        <taxon>Spermatophyta</taxon>
        <taxon>Magnoliopsida</taxon>
        <taxon>Liliopsida</taxon>
        <taxon>Poales</taxon>
        <taxon>Poaceae</taxon>
        <taxon>PACMAD clade</taxon>
        <taxon>Panicoideae</taxon>
        <taxon>Andropogonodae</taxon>
        <taxon>Andropogoneae</taxon>
        <taxon>Tripsacinae</taxon>
        <taxon>Zea</taxon>
    </lineage>
</organism>
<reference key="1">
    <citation type="journal article" date="1994" name="Plant Mol. Biol.">
        <title>Cloning and characterization of maize herbicide safener-induced cDNAs encoding subunits of glutathione S-transferase isoforms I, II and IV.</title>
        <authorList>
            <person name="Jepson I."/>
            <person name="Lay V.J."/>
            <person name="Holt D.C."/>
            <person name="Bright S.W.J."/>
            <person name="Greenland A.J."/>
        </authorList>
    </citation>
    <scope>NUCLEOTIDE SEQUENCE [MRNA]</scope>
    <source>
        <strain>cv. UE95</strain>
        <tissue>Seedling root</tissue>
    </source>
</reference>
<reference key="2">
    <citation type="journal article" date="1995" name="Plant Physiol.">
        <title>A cDNA clone encoding the 27-kilodalton subunits of glutathione S-transferase IV from Zea mays.</title>
        <authorList>
            <person name="Irzyk G.P."/>
            <person name="Potter S."/>
            <person name="Ward E."/>
            <person name="Fuerst E.P."/>
        </authorList>
    </citation>
    <scope>NUCLEOTIDE SEQUENCE [MRNA]</scope>
    <source>
        <strain>cv. Pioneer hybrid 3906</strain>
    </source>
</reference>
<reference key="3">
    <citation type="journal article" date="1993" name="Plant Physiol.">
        <title>Purification and characterization of a glutathione S-transferase from benoxacor-treated maize (Zea mays).</title>
        <authorList>
            <person name="Irzyk G.P."/>
            <person name="Fuerst E.P."/>
        </authorList>
    </citation>
    <scope>PARTIAL PROTEIN SEQUENCE</scope>
    <scope>CHARACTERIZATION</scope>
</reference>
<feature type="initiator methionine" description="Removed">
    <location>
        <position position="1"/>
    </location>
</feature>
<feature type="chain" id="PRO_0000185843" description="Glutathione S-transferase 4">
    <location>
        <begin position="2"/>
        <end position="223"/>
    </location>
</feature>
<feature type="domain" description="GST N-terminal">
    <location>
        <begin position="4"/>
        <end position="85"/>
    </location>
</feature>
<feature type="domain" description="GST C-terminal">
    <location>
        <begin position="90"/>
        <end position="223"/>
    </location>
</feature>
<feature type="binding site" evidence="1">
    <location>
        <position position="14"/>
    </location>
    <ligand>
        <name>glutathione</name>
        <dbReference type="ChEBI" id="CHEBI:57925"/>
    </ligand>
</feature>
<feature type="binding site" evidence="1">
    <location>
        <begin position="43"/>
        <end position="44"/>
    </location>
    <ligand>
        <name>glutathione</name>
        <dbReference type="ChEBI" id="CHEBI:57925"/>
    </ligand>
</feature>
<feature type="binding site" evidence="1">
    <location>
        <begin position="56"/>
        <end position="57"/>
    </location>
    <ligand>
        <name>glutathione</name>
        <dbReference type="ChEBI" id="CHEBI:57925"/>
    </ligand>
</feature>
<feature type="binding site" evidence="1">
    <location>
        <begin position="69"/>
        <end position="70"/>
    </location>
    <ligand>
        <name>glutathione</name>
        <dbReference type="ChEBI" id="CHEBI:57925"/>
    </ligand>
</feature>
<feature type="modified residue" description="Blocked amino end (Ala)">
    <location>
        <position position="2"/>
    </location>
</feature>
<evidence type="ECO:0000250" key="1"/>
<evidence type="ECO:0000305" key="2"/>
<protein>
    <recommendedName>
        <fullName>Glutathione S-transferase 4</fullName>
        <ecNumber>2.5.1.18</ecNumber>
    </recommendedName>
    <alternativeName>
        <fullName>GST class-phi member 4</fullName>
    </alternativeName>
    <alternativeName>
        <fullName>GST-27</fullName>
    </alternativeName>
    <alternativeName>
        <fullName>GST-IV</fullName>
    </alternativeName>
</protein>
<name>GSTF4_MAIZE</name>
<comment type="function">
    <text>Conjugation of reduced glutathione to a wide number of exogenous and endogenous hydrophobic electrophiles. Involved in the detoxification of certain herbicides. Most active with substrates possessing a chloroacetamide structure. Trans-cinnamic acid and 1-chloro-2,4-dinitrobenzene are not effective substrates. May play an important role in the benoxacor-mediated protection of maize from metolachlor injury.</text>
</comment>
<comment type="catalytic activity">
    <reaction>
        <text>RX + glutathione = an S-substituted glutathione + a halide anion + H(+)</text>
        <dbReference type="Rhea" id="RHEA:16437"/>
        <dbReference type="ChEBI" id="CHEBI:15378"/>
        <dbReference type="ChEBI" id="CHEBI:16042"/>
        <dbReference type="ChEBI" id="CHEBI:17792"/>
        <dbReference type="ChEBI" id="CHEBI:57925"/>
        <dbReference type="ChEBI" id="CHEBI:90779"/>
        <dbReference type="EC" id="2.5.1.18"/>
    </reaction>
</comment>
<comment type="biophysicochemical properties">
    <phDependence>
        <text>Optimum pH is 7.5-8. Active from pH 6 to 9.</text>
    </phDependence>
</comment>
<comment type="subunit">
    <text>Homodimer or heterodimer of GST-I and GST-IV (=GST-II).</text>
</comment>
<comment type="tissue specificity">
    <text>Seedling roots.</text>
</comment>
<comment type="induction">
    <text>By herbicides.</text>
</comment>
<comment type="similarity">
    <text evidence="2">Belongs to the GST superfamily. Phi family.</text>
</comment>
<keyword id="KW-0903">Direct protein sequencing</keyword>
<keyword id="KW-1185">Reference proteome</keyword>
<keyword id="KW-0808">Transferase</keyword>
<proteinExistence type="evidence at protein level"/>
<dbReference type="EC" id="2.5.1.18"/>
<dbReference type="EMBL" id="X79515">
    <property type="protein sequence ID" value="CAA56047.1"/>
    <property type="molecule type" value="mRNA"/>
</dbReference>
<dbReference type="EMBL" id="U12679">
    <property type="protein sequence ID" value="AAA20585.1"/>
    <property type="molecule type" value="mRNA"/>
</dbReference>
<dbReference type="PIR" id="S52037">
    <property type="entry name" value="S52037"/>
</dbReference>
<dbReference type="RefSeq" id="NP_001105366.1">
    <property type="nucleotide sequence ID" value="NM_001111896.2"/>
</dbReference>
<dbReference type="SMR" id="P46420"/>
<dbReference type="STRING" id="4577.P46420"/>
<dbReference type="PaxDb" id="4577-GRMZM2G132093_P01"/>
<dbReference type="EnsemblPlants" id="Zm00001eb418060_T001">
    <property type="protein sequence ID" value="Zm00001eb418060_P001"/>
    <property type="gene ID" value="Zm00001eb418060"/>
</dbReference>
<dbReference type="GeneID" id="542311"/>
<dbReference type="Gramene" id="Zm00001eb418060_T001">
    <property type="protein sequence ID" value="Zm00001eb418060_P001"/>
    <property type="gene ID" value="Zm00001eb418060"/>
</dbReference>
<dbReference type="KEGG" id="zma:542311"/>
<dbReference type="MaizeGDB" id="113242"/>
<dbReference type="eggNOG" id="KOG0867">
    <property type="taxonomic scope" value="Eukaryota"/>
</dbReference>
<dbReference type="HOGENOM" id="CLU_011226_5_1_1"/>
<dbReference type="InParanoid" id="P46420"/>
<dbReference type="OMA" id="HYFMGTE"/>
<dbReference type="OrthoDB" id="584361at2759"/>
<dbReference type="Proteomes" id="UP000007305">
    <property type="component" value="Chromosome 10"/>
</dbReference>
<dbReference type="ExpressionAtlas" id="P46420">
    <property type="expression patterns" value="baseline and differential"/>
</dbReference>
<dbReference type="GO" id="GO:0005737">
    <property type="term" value="C:cytoplasm"/>
    <property type="evidence" value="ECO:0000318"/>
    <property type="project" value="GO_Central"/>
</dbReference>
<dbReference type="GO" id="GO:0032991">
    <property type="term" value="C:protein-containing complex"/>
    <property type="evidence" value="ECO:0000314"/>
    <property type="project" value="AgBase"/>
</dbReference>
<dbReference type="GO" id="GO:0043295">
    <property type="term" value="F:glutathione binding"/>
    <property type="evidence" value="ECO:0000314"/>
    <property type="project" value="AgBase"/>
</dbReference>
<dbReference type="GO" id="GO:0004364">
    <property type="term" value="F:glutathione transferase activity"/>
    <property type="evidence" value="ECO:0000314"/>
    <property type="project" value="AgBase"/>
</dbReference>
<dbReference type="GO" id="GO:0042803">
    <property type="term" value="F:protein homodimerization activity"/>
    <property type="evidence" value="ECO:0000314"/>
    <property type="project" value="AgBase"/>
</dbReference>
<dbReference type="GO" id="GO:0006749">
    <property type="term" value="P:glutathione metabolic process"/>
    <property type="evidence" value="ECO:0000318"/>
    <property type="project" value="GO_Central"/>
</dbReference>
<dbReference type="GO" id="GO:0009635">
    <property type="term" value="P:response to herbicide"/>
    <property type="evidence" value="ECO:0000314"/>
    <property type="project" value="AgBase"/>
</dbReference>
<dbReference type="GO" id="GO:0009410">
    <property type="term" value="P:response to xenobiotic stimulus"/>
    <property type="evidence" value="ECO:0000314"/>
    <property type="project" value="AgBase"/>
</dbReference>
<dbReference type="CDD" id="cd03187">
    <property type="entry name" value="GST_C_Phi"/>
    <property type="match status" value="1"/>
</dbReference>
<dbReference type="CDD" id="cd03053">
    <property type="entry name" value="GST_N_Phi"/>
    <property type="match status" value="1"/>
</dbReference>
<dbReference type="FunFam" id="1.20.1050.10:FF:000004">
    <property type="entry name" value="Glutathione S-transferase F2"/>
    <property type="match status" value="1"/>
</dbReference>
<dbReference type="FunFam" id="3.40.30.10:FF:000016">
    <property type="entry name" value="Glutathione S-transferase F2"/>
    <property type="match status" value="1"/>
</dbReference>
<dbReference type="Gene3D" id="1.20.1050.10">
    <property type="match status" value="1"/>
</dbReference>
<dbReference type="Gene3D" id="3.40.30.10">
    <property type="entry name" value="Glutaredoxin"/>
    <property type="match status" value="1"/>
</dbReference>
<dbReference type="InterPro" id="IPR010987">
    <property type="entry name" value="Glutathione-S-Trfase_C-like"/>
</dbReference>
<dbReference type="InterPro" id="IPR036282">
    <property type="entry name" value="Glutathione-S-Trfase_C_sf"/>
</dbReference>
<dbReference type="InterPro" id="IPR040079">
    <property type="entry name" value="Glutathione_S-Trfase"/>
</dbReference>
<dbReference type="InterPro" id="IPR004045">
    <property type="entry name" value="Glutathione_S-Trfase_N"/>
</dbReference>
<dbReference type="InterPro" id="IPR004046">
    <property type="entry name" value="GST_C"/>
</dbReference>
<dbReference type="InterPro" id="IPR034347">
    <property type="entry name" value="GST_Phi_C"/>
</dbReference>
<dbReference type="InterPro" id="IPR036249">
    <property type="entry name" value="Thioredoxin-like_sf"/>
</dbReference>
<dbReference type="PANTHER" id="PTHR43900:SF17">
    <property type="entry name" value="GLUTATHIONE S-TRANSFERASE 4"/>
    <property type="match status" value="1"/>
</dbReference>
<dbReference type="PANTHER" id="PTHR43900">
    <property type="entry name" value="GLUTATHIONE S-TRANSFERASE RHO"/>
    <property type="match status" value="1"/>
</dbReference>
<dbReference type="Pfam" id="PF00043">
    <property type="entry name" value="GST_C"/>
    <property type="match status" value="1"/>
</dbReference>
<dbReference type="Pfam" id="PF02798">
    <property type="entry name" value="GST_N"/>
    <property type="match status" value="1"/>
</dbReference>
<dbReference type="SFLD" id="SFLDS00019">
    <property type="entry name" value="Glutathione_Transferase_(cytos"/>
    <property type="match status" value="1"/>
</dbReference>
<dbReference type="SFLD" id="SFLDG01154">
    <property type="entry name" value="Main.5:_Phi-like"/>
    <property type="match status" value="1"/>
</dbReference>
<dbReference type="SUPFAM" id="SSF47616">
    <property type="entry name" value="GST C-terminal domain-like"/>
    <property type="match status" value="1"/>
</dbReference>
<dbReference type="SUPFAM" id="SSF52833">
    <property type="entry name" value="Thioredoxin-like"/>
    <property type="match status" value="1"/>
</dbReference>
<dbReference type="PROSITE" id="PS50405">
    <property type="entry name" value="GST_CTER"/>
    <property type="match status" value="1"/>
</dbReference>
<dbReference type="PROSITE" id="PS50404">
    <property type="entry name" value="GST_NTER"/>
    <property type="match status" value="1"/>
</dbReference>
<gene>
    <name type="primary">GST4</name>
</gene>
<sequence>MATPAVKVYGWAISPFVSRALLALEEAGVDYELVPMSRQDGDHRRPEHLARNPFGKVPVLEDGDLTLFESRAIARHVLRKHKPELLGGGRLEQTAMVDVWLEVEAHQLSPPAIAIVVECVFAPFLGRERNQAVVDENVEKLKKVLEVYEARLATCTYLAGDFLSLADLSPFTIMHCLMATEYAALVHALPHVSAWWQGLAARPAANKVAQFMPVGAGAPKEQE</sequence>